<gene>
    <name type="ordered locus">MAP_0256</name>
</gene>
<proteinExistence type="inferred from homology"/>
<dbReference type="EC" id="2.1.1.-"/>
<dbReference type="EMBL" id="AE016958">
    <property type="protein sequence ID" value="AAS02573.1"/>
    <property type="molecule type" value="Genomic_DNA"/>
</dbReference>
<dbReference type="RefSeq" id="WP_003873400.1">
    <property type="nucleotide sequence ID" value="NZ_CP106873.1"/>
</dbReference>
<dbReference type="SMR" id="Q745R0"/>
<dbReference type="STRING" id="262316.MAP_0256"/>
<dbReference type="KEGG" id="mpa:MAP_0256"/>
<dbReference type="PATRIC" id="fig|262316.17.peg.270"/>
<dbReference type="eggNOG" id="COG3315">
    <property type="taxonomic scope" value="Bacteria"/>
</dbReference>
<dbReference type="HOGENOM" id="CLU_056160_2_1_11"/>
<dbReference type="Proteomes" id="UP000000580">
    <property type="component" value="Chromosome"/>
</dbReference>
<dbReference type="GO" id="GO:0008168">
    <property type="term" value="F:methyltransferase activity"/>
    <property type="evidence" value="ECO:0007669"/>
    <property type="project" value="UniProtKB-KW"/>
</dbReference>
<dbReference type="GO" id="GO:0032259">
    <property type="term" value="P:methylation"/>
    <property type="evidence" value="ECO:0007669"/>
    <property type="project" value="UniProtKB-KW"/>
</dbReference>
<dbReference type="FunFam" id="3.40.50.150:FF:000152">
    <property type="entry name" value="S-adenosyl-L-methionine-dependent methyltransferase"/>
    <property type="match status" value="1"/>
</dbReference>
<dbReference type="Gene3D" id="3.40.50.150">
    <property type="entry name" value="Vaccinia Virus protein VP39"/>
    <property type="match status" value="1"/>
</dbReference>
<dbReference type="InterPro" id="IPR007213">
    <property type="entry name" value="Ppm1/Ppm2/Tcmp"/>
</dbReference>
<dbReference type="InterPro" id="IPR029063">
    <property type="entry name" value="SAM-dependent_MTases_sf"/>
</dbReference>
<dbReference type="InterPro" id="IPR011610">
    <property type="entry name" value="SAM_mthyl_Trfase_ML2640-like"/>
</dbReference>
<dbReference type="NCBIfam" id="TIGR00027">
    <property type="entry name" value="mthyl_TIGR00027"/>
    <property type="match status" value="1"/>
</dbReference>
<dbReference type="PANTHER" id="PTHR43619">
    <property type="entry name" value="S-ADENOSYL-L-METHIONINE-DEPENDENT METHYLTRANSFERASE YKTD-RELATED"/>
    <property type="match status" value="1"/>
</dbReference>
<dbReference type="PANTHER" id="PTHR43619:SF2">
    <property type="entry name" value="S-ADENOSYL-L-METHIONINE-DEPENDENT METHYLTRANSFERASES SUPERFAMILY PROTEIN"/>
    <property type="match status" value="1"/>
</dbReference>
<dbReference type="Pfam" id="PF04072">
    <property type="entry name" value="LCM"/>
    <property type="match status" value="1"/>
</dbReference>
<dbReference type="SUPFAM" id="SSF53335">
    <property type="entry name" value="S-adenosyl-L-methionine-dependent methyltransferases"/>
    <property type="match status" value="1"/>
</dbReference>
<accession>Q745R0</accession>
<sequence>MPRTDNDSWDITQSVGATALGVAAARAAETESENPLISDPFARIFVEAAGKGMWSIYADPALLTKADDLEPDLRGRLQLMIDFMATRTAFFDEFFLAAADAGVRQVVILAAGLDARSWRLPWPDGTVVYELDQPKVLDFKSTTLREHGAQPKAELVNVPIDLRQDWPKALQEAGFDASRPAVWSAEGLVRYLPAQAQDLLFERIDALSAPGSRLASNVPDSGFTDPDRLARQREDMRRMRAAAAKLVDAEITDFDDLWYPEERTPVDSWLRERGWDVSTATFAELMARYGRSIPQGAQDSMPPTLYVSARRRAG</sequence>
<keyword id="KW-0489">Methyltransferase</keyword>
<keyword id="KW-1185">Reference proteome</keyword>
<keyword id="KW-0949">S-adenosyl-L-methionine</keyword>
<keyword id="KW-0808">Transferase</keyword>
<reference key="1">
    <citation type="journal article" date="2005" name="Proc. Natl. Acad. Sci. U.S.A.">
        <title>The complete genome sequence of Mycobacterium avium subspecies paratuberculosis.</title>
        <authorList>
            <person name="Li L."/>
            <person name="Bannantine J.P."/>
            <person name="Zhang Q."/>
            <person name="Amonsin A."/>
            <person name="May B.J."/>
            <person name="Alt D."/>
            <person name="Banerji N."/>
            <person name="Kanjilal S."/>
            <person name="Kapur V."/>
        </authorList>
    </citation>
    <scope>NUCLEOTIDE SEQUENCE [LARGE SCALE GENOMIC DNA]</scope>
    <source>
        <strain>ATCC BAA-968 / K-10</strain>
    </source>
</reference>
<feature type="chain" id="PRO_0000361178" description="Putative S-adenosyl-L-methionine-dependent methyltransferase MAP_0256">
    <location>
        <begin position="1"/>
        <end position="314"/>
    </location>
</feature>
<feature type="binding site" evidence="1">
    <location>
        <position position="132"/>
    </location>
    <ligand>
        <name>S-adenosyl-L-methionine</name>
        <dbReference type="ChEBI" id="CHEBI:59789"/>
    </ligand>
</feature>
<feature type="binding site" evidence="1">
    <location>
        <begin position="161"/>
        <end position="162"/>
    </location>
    <ligand>
        <name>S-adenosyl-L-methionine</name>
        <dbReference type="ChEBI" id="CHEBI:59789"/>
    </ligand>
</feature>
<comment type="function">
    <text evidence="1">Exhibits S-adenosyl-L-methionine-dependent methyltransferase activity.</text>
</comment>
<comment type="similarity">
    <text evidence="2">Belongs to the UPF0677 family.</text>
</comment>
<evidence type="ECO:0000250" key="1"/>
<evidence type="ECO:0000305" key="2"/>
<name>Y256_MYCPA</name>
<organism>
    <name type="scientific">Mycolicibacterium paratuberculosis (strain ATCC BAA-968 / K-10)</name>
    <name type="common">Mycobacterium paratuberculosis</name>
    <dbReference type="NCBI Taxonomy" id="262316"/>
    <lineage>
        <taxon>Bacteria</taxon>
        <taxon>Bacillati</taxon>
        <taxon>Actinomycetota</taxon>
        <taxon>Actinomycetes</taxon>
        <taxon>Mycobacteriales</taxon>
        <taxon>Mycobacteriaceae</taxon>
        <taxon>Mycobacterium</taxon>
        <taxon>Mycobacterium avium complex (MAC)</taxon>
    </lineage>
</organism>
<protein>
    <recommendedName>
        <fullName>Putative S-adenosyl-L-methionine-dependent methyltransferase MAP_0256</fullName>
        <ecNumber>2.1.1.-</ecNumber>
    </recommendedName>
</protein>